<proteinExistence type="inferred from homology"/>
<name>RL17_AZOVD</name>
<evidence type="ECO:0000255" key="1">
    <source>
        <dbReference type="HAMAP-Rule" id="MF_01368"/>
    </source>
</evidence>
<evidence type="ECO:0000305" key="2"/>
<feature type="chain" id="PRO_1000214996" description="Large ribosomal subunit protein bL17">
    <location>
        <begin position="1"/>
        <end position="130"/>
    </location>
</feature>
<sequence>MRHRKSGRHLSRTSAHRKAMFQNMAVSLFEHELIKTTLPKAKELRRVAEPLITLAKEDSVANRRLAFDRTRSKAAVGKLFNDLGKRYANRPGGYLRILKCGFRAGDNAPMAYVELVDRPVDGEALVGAAE</sequence>
<keyword id="KW-0687">Ribonucleoprotein</keyword>
<keyword id="KW-0689">Ribosomal protein</keyword>
<dbReference type="EMBL" id="CP001157">
    <property type="protein sequence ID" value="ACO76902.1"/>
    <property type="molecule type" value="Genomic_DNA"/>
</dbReference>
<dbReference type="RefSeq" id="WP_012699327.1">
    <property type="nucleotide sequence ID" value="NC_012560.1"/>
</dbReference>
<dbReference type="SMR" id="C1DKN9"/>
<dbReference type="STRING" id="322710.Avin_06510"/>
<dbReference type="EnsemblBacteria" id="ACO76902">
    <property type="protein sequence ID" value="ACO76902"/>
    <property type="gene ID" value="Avin_06510"/>
</dbReference>
<dbReference type="GeneID" id="88184062"/>
<dbReference type="KEGG" id="avn:Avin_06510"/>
<dbReference type="eggNOG" id="COG0203">
    <property type="taxonomic scope" value="Bacteria"/>
</dbReference>
<dbReference type="HOGENOM" id="CLU_074407_2_2_6"/>
<dbReference type="OrthoDB" id="9809073at2"/>
<dbReference type="Proteomes" id="UP000002424">
    <property type="component" value="Chromosome"/>
</dbReference>
<dbReference type="GO" id="GO:0022625">
    <property type="term" value="C:cytosolic large ribosomal subunit"/>
    <property type="evidence" value="ECO:0007669"/>
    <property type="project" value="TreeGrafter"/>
</dbReference>
<dbReference type="GO" id="GO:0003735">
    <property type="term" value="F:structural constituent of ribosome"/>
    <property type="evidence" value="ECO:0007669"/>
    <property type="project" value="InterPro"/>
</dbReference>
<dbReference type="GO" id="GO:0006412">
    <property type="term" value="P:translation"/>
    <property type="evidence" value="ECO:0007669"/>
    <property type="project" value="UniProtKB-UniRule"/>
</dbReference>
<dbReference type="FunFam" id="3.90.1030.10:FF:000001">
    <property type="entry name" value="50S ribosomal protein L17"/>
    <property type="match status" value="1"/>
</dbReference>
<dbReference type="Gene3D" id="3.90.1030.10">
    <property type="entry name" value="Ribosomal protein L17"/>
    <property type="match status" value="1"/>
</dbReference>
<dbReference type="HAMAP" id="MF_01368">
    <property type="entry name" value="Ribosomal_bL17"/>
    <property type="match status" value="1"/>
</dbReference>
<dbReference type="InterPro" id="IPR000456">
    <property type="entry name" value="Ribosomal_bL17"/>
</dbReference>
<dbReference type="InterPro" id="IPR047859">
    <property type="entry name" value="Ribosomal_bL17_CS"/>
</dbReference>
<dbReference type="InterPro" id="IPR036373">
    <property type="entry name" value="Ribosomal_bL17_sf"/>
</dbReference>
<dbReference type="NCBIfam" id="TIGR00059">
    <property type="entry name" value="L17"/>
    <property type="match status" value="1"/>
</dbReference>
<dbReference type="PANTHER" id="PTHR14413:SF16">
    <property type="entry name" value="LARGE RIBOSOMAL SUBUNIT PROTEIN BL17M"/>
    <property type="match status" value="1"/>
</dbReference>
<dbReference type="PANTHER" id="PTHR14413">
    <property type="entry name" value="RIBOSOMAL PROTEIN L17"/>
    <property type="match status" value="1"/>
</dbReference>
<dbReference type="Pfam" id="PF01196">
    <property type="entry name" value="Ribosomal_L17"/>
    <property type="match status" value="1"/>
</dbReference>
<dbReference type="SUPFAM" id="SSF64263">
    <property type="entry name" value="Prokaryotic ribosomal protein L17"/>
    <property type="match status" value="1"/>
</dbReference>
<dbReference type="PROSITE" id="PS01167">
    <property type="entry name" value="RIBOSOMAL_L17"/>
    <property type="match status" value="1"/>
</dbReference>
<accession>C1DKN9</accession>
<reference key="1">
    <citation type="journal article" date="2009" name="J. Bacteriol.">
        <title>Genome sequence of Azotobacter vinelandii, an obligate aerobe specialized to support diverse anaerobic metabolic processes.</title>
        <authorList>
            <person name="Setubal J.C."/>
            <person name="Dos Santos P."/>
            <person name="Goldman B.S."/>
            <person name="Ertesvaag H."/>
            <person name="Espin G."/>
            <person name="Rubio L.M."/>
            <person name="Valla S."/>
            <person name="Almeida N.F."/>
            <person name="Balasubramanian D."/>
            <person name="Cromes L."/>
            <person name="Curatti L."/>
            <person name="Du Z."/>
            <person name="Godsy E."/>
            <person name="Goodner B."/>
            <person name="Hellner-Burris K."/>
            <person name="Hernandez J.A."/>
            <person name="Houmiel K."/>
            <person name="Imperial J."/>
            <person name="Kennedy C."/>
            <person name="Larson T.J."/>
            <person name="Latreille P."/>
            <person name="Ligon L.S."/>
            <person name="Lu J."/>
            <person name="Maerk M."/>
            <person name="Miller N.M."/>
            <person name="Norton S."/>
            <person name="O'Carroll I.P."/>
            <person name="Paulsen I."/>
            <person name="Raulfs E.C."/>
            <person name="Roemer R."/>
            <person name="Rosser J."/>
            <person name="Segura D."/>
            <person name="Slater S."/>
            <person name="Stricklin S.L."/>
            <person name="Studholme D.J."/>
            <person name="Sun J."/>
            <person name="Viana C.J."/>
            <person name="Wallin E."/>
            <person name="Wang B."/>
            <person name="Wheeler C."/>
            <person name="Zhu H."/>
            <person name="Dean D.R."/>
            <person name="Dixon R."/>
            <person name="Wood D."/>
        </authorList>
    </citation>
    <scope>NUCLEOTIDE SEQUENCE [LARGE SCALE GENOMIC DNA]</scope>
    <source>
        <strain>DJ / ATCC BAA-1303</strain>
    </source>
</reference>
<protein>
    <recommendedName>
        <fullName evidence="1">Large ribosomal subunit protein bL17</fullName>
    </recommendedName>
    <alternativeName>
        <fullName evidence="2">50S ribosomal protein L17</fullName>
    </alternativeName>
</protein>
<comment type="subunit">
    <text evidence="1">Part of the 50S ribosomal subunit. Contacts protein L32.</text>
</comment>
<comment type="similarity">
    <text evidence="1">Belongs to the bacterial ribosomal protein bL17 family.</text>
</comment>
<organism>
    <name type="scientific">Azotobacter vinelandii (strain DJ / ATCC BAA-1303)</name>
    <dbReference type="NCBI Taxonomy" id="322710"/>
    <lineage>
        <taxon>Bacteria</taxon>
        <taxon>Pseudomonadati</taxon>
        <taxon>Pseudomonadota</taxon>
        <taxon>Gammaproteobacteria</taxon>
        <taxon>Pseudomonadales</taxon>
        <taxon>Pseudomonadaceae</taxon>
        <taxon>Azotobacter</taxon>
    </lineage>
</organism>
<gene>
    <name evidence="1" type="primary">rplQ</name>
    <name type="ordered locus">Avin_06510</name>
</gene>